<proteinExistence type="inferred from homology"/>
<sequence>MDKTIDDIDFEKSGGLVPVIVQDANTKEVLTLAYSNRESLELAKKTRKSWFYSRSRNKLWMKGEESGNTQEIKEILVDCDSDAIIYLVEPSGPACHTGERVCFHNELK</sequence>
<dbReference type="EC" id="3.5.4.19" evidence="1"/>
<dbReference type="EMBL" id="CP000866">
    <property type="protein sequence ID" value="ABX13447.1"/>
    <property type="molecule type" value="Genomic_DNA"/>
</dbReference>
<dbReference type="RefSeq" id="WP_012215934.1">
    <property type="nucleotide sequence ID" value="NC_010085.1"/>
</dbReference>
<dbReference type="SMR" id="A9A5W9"/>
<dbReference type="FunCoup" id="A9A5W9">
    <property type="interactions" value="58"/>
</dbReference>
<dbReference type="STRING" id="436308.Nmar_1551"/>
<dbReference type="EnsemblBacteria" id="ABX13447">
    <property type="protein sequence ID" value="ABX13447"/>
    <property type="gene ID" value="Nmar_1551"/>
</dbReference>
<dbReference type="GeneID" id="5774254"/>
<dbReference type="KEGG" id="nmr:Nmar_1551"/>
<dbReference type="eggNOG" id="arCOG02676">
    <property type="taxonomic scope" value="Archaea"/>
</dbReference>
<dbReference type="HOGENOM" id="CLU_048577_5_3_2"/>
<dbReference type="InParanoid" id="A9A5W9"/>
<dbReference type="OrthoDB" id="5853at2157"/>
<dbReference type="PhylomeDB" id="A9A5W9"/>
<dbReference type="UniPathway" id="UPA00031">
    <property type="reaction ID" value="UER00008"/>
</dbReference>
<dbReference type="Proteomes" id="UP000000792">
    <property type="component" value="Chromosome"/>
</dbReference>
<dbReference type="GO" id="GO:0005737">
    <property type="term" value="C:cytoplasm"/>
    <property type="evidence" value="ECO:0007669"/>
    <property type="project" value="UniProtKB-SubCell"/>
</dbReference>
<dbReference type="GO" id="GO:0000287">
    <property type="term" value="F:magnesium ion binding"/>
    <property type="evidence" value="ECO:0007669"/>
    <property type="project" value="UniProtKB-UniRule"/>
</dbReference>
<dbReference type="GO" id="GO:0004635">
    <property type="term" value="F:phosphoribosyl-AMP cyclohydrolase activity"/>
    <property type="evidence" value="ECO:0007669"/>
    <property type="project" value="UniProtKB-UniRule"/>
</dbReference>
<dbReference type="GO" id="GO:0008270">
    <property type="term" value="F:zinc ion binding"/>
    <property type="evidence" value="ECO:0007669"/>
    <property type="project" value="UniProtKB-UniRule"/>
</dbReference>
<dbReference type="GO" id="GO:0000105">
    <property type="term" value="P:L-histidine biosynthetic process"/>
    <property type="evidence" value="ECO:0007669"/>
    <property type="project" value="UniProtKB-UniRule"/>
</dbReference>
<dbReference type="FunFam" id="3.10.20.810:FF:000001">
    <property type="entry name" value="Histidine biosynthesis bifunctional protein HisIE"/>
    <property type="match status" value="1"/>
</dbReference>
<dbReference type="Gene3D" id="3.10.20.810">
    <property type="entry name" value="Phosphoribosyl-AMP cyclohydrolase"/>
    <property type="match status" value="1"/>
</dbReference>
<dbReference type="HAMAP" id="MF_01021">
    <property type="entry name" value="HisI"/>
    <property type="match status" value="1"/>
</dbReference>
<dbReference type="InterPro" id="IPR026660">
    <property type="entry name" value="PRA-CH"/>
</dbReference>
<dbReference type="InterPro" id="IPR002496">
    <property type="entry name" value="PRib_AMP_CycHydrolase_dom"/>
</dbReference>
<dbReference type="InterPro" id="IPR038019">
    <property type="entry name" value="PRib_AMP_CycHydrolase_sf"/>
</dbReference>
<dbReference type="NCBIfam" id="NF000768">
    <property type="entry name" value="PRK00051.1"/>
    <property type="match status" value="1"/>
</dbReference>
<dbReference type="PANTHER" id="PTHR42945">
    <property type="entry name" value="HISTIDINE BIOSYNTHESIS BIFUNCTIONAL PROTEIN"/>
    <property type="match status" value="1"/>
</dbReference>
<dbReference type="PANTHER" id="PTHR42945:SF1">
    <property type="entry name" value="HISTIDINE BIOSYNTHESIS BIFUNCTIONAL PROTEIN HIS7"/>
    <property type="match status" value="1"/>
</dbReference>
<dbReference type="Pfam" id="PF01502">
    <property type="entry name" value="PRA-CH"/>
    <property type="match status" value="1"/>
</dbReference>
<dbReference type="SUPFAM" id="SSF141734">
    <property type="entry name" value="HisI-like"/>
    <property type="match status" value="1"/>
</dbReference>
<feature type="chain" id="PRO_1000135357" description="Phosphoribosyl-AMP cyclohydrolase">
    <location>
        <begin position="1"/>
        <end position="108"/>
    </location>
</feature>
<feature type="binding site" evidence="1">
    <location>
        <position position="78"/>
    </location>
    <ligand>
        <name>Mg(2+)</name>
        <dbReference type="ChEBI" id="CHEBI:18420"/>
    </ligand>
</feature>
<feature type="binding site" evidence="1">
    <location>
        <position position="79"/>
    </location>
    <ligand>
        <name>Zn(2+)</name>
        <dbReference type="ChEBI" id="CHEBI:29105"/>
        <note>ligand shared between dimeric partners</note>
    </ligand>
</feature>
<feature type="binding site" evidence="1">
    <location>
        <position position="80"/>
    </location>
    <ligand>
        <name>Mg(2+)</name>
        <dbReference type="ChEBI" id="CHEBI:18420"/>
    </ligand>
</feature>
<feature type="binding site" evidence="1">
    <location>
        <position position="82"/>
    </location>
    <ligand>
        <name>Mg(2+)</name>
        <dbReference type="ChEBI" id="CHEBI:18420"/>
    </ligand>
</feature>
<feature type="binding site" evidence="1">
    <location>
        <position position="95"/>
    </location>
    <ligand>
        <name>Zn(2+)</name>
        <dbReference type="ChEBI" id="CHEBI:29105"/>
        <note>ligand shared between dimeric partners</note>
    </ligand>
</feature>
<feature type="binding site" evidence="1">
    <location>
        <position position="102"/>
    </location>
    <ligand>
        <name>Zn(2+)</name>
        <dbReference type="ChEBI" id="CHEBI:29105"/>
        <note>ligand shared between dimeric partners</note>
    </ligand>
</feature>
<keyword id="KW-0028">Amino-acid biosynthesis</keyword>
<keyword id="KW-0963">Cytoplasm</keyword>
<keyword id="KW-0368">Histidine biosynthesis</keyword>
<keyword id="KW-0378">Hydrolase</keyword>
<keyword id="KW-0460">Magnesium</keyword>
<keyword id="KW-0479">Metal-binding</keyword>
<keyword id="KW-1185">Reference proteome</keyword>
<keyword id="KW-0862">Zinc</keyword>
<evidence type="ECO:0000255" key="1">
    <source>
        <dbReference type="HAMAP-Rule" id="MF_01021"/>
    </source>
</evidence>
<comment type="function">
    <text evidence="1">Catalyzes the hydrolysis of the adenine ring of phosphoribosyl-AMP.</text>
</comment>
<comment type="catalytic activity">
    <reaction evidence="1">
        <text>1-(5-phospho-beta-D-ribosyl)-5'-AMP + H2O = 1-(5-phospho-beta-D-ribosyl)-5-[(5-phospho-beta-D-ribosylamino)methylideneamino]imidazole-4-carboxamide</text>
        <dbReference type="Rhea" id="RHEA:20049"/>
        <dbReference type="ChEBI" id="CHEBI:15377"/>
        <dbReference type="ChEBI" id="CHEBI:58435"/>
        <dbReference type="ChEBI" id="CHEBI:59457"/>
        <dbReference type="EC" id="3.5.4.19"/>
    </reaction>
</comment>
<comment type="cofactor">
    <cofactor evidence="1">
        <name>Mg(2+)</name>
        <dbReference type="ChEBI" id="CHEBI:18420"/>
    </cofactor>
    <text evidence="1">Binds 1 Mg(2+) ion per subunit.</text>
</comment>
<comment type="cofactor">
    <cofactor evidence="1">
        <name>Zn(2+)</name>
        <dbReference type="ChEBI" id="CHEBI:29105"/>
    </cofactor>
    <text evidence="1">Binds 1 zinc ion per subunit.</text>
</comment>
<comment type="pathway">
    <text evidence="1">Amino-acid biosynthesis; L-histidine biosynthesis; L-histidine from 5-phospho-alpha-D-ribose 1-diphosphate: step 3/9.</text>
</comment>
<comment type="subunit">
    <text evidence="1">Homodimer.</text>
</comment>
<comment type="subcellular location">
    <subcellularLocation>
        <location evidence="1">Cytoplasm</location>
    </subcellularLocation>
</comment>
<comment type="similarity">
    <text evidence="1">Belongs to the PRA-CH family.</text>
</comment>
<accession>A9A5W9</accession>
<organism>
    <name type="scientific">Nitrosopumilus maritimus (strain SCM1)</name>
    <dbReference type="NCBI Taxonomy" id="436308"/>
    <lineage>
        <taxon>Archaea</taxon>
        <taxon>Nitrososphaerota</taxon>
        <taxon>Nitrososphaeria</taxon>
        <taxon>Nitrosopumilales</taxon>
        <taxon>Nitrosopumilaceae</taxon>
        <taxon>Nitrosopumilus</taxon>
    </lineage>
</organism>
<reference key="1">
    <citation type="journal article" date="2010" name="Proc. Natl. Acad. Sci. U.S.A.">
        <title>Nitrosopumilus maritimus genome reveals unique mechanisms for nitrification and autotrophy in globally distributed marine crenarchaea.</title>
        <authorList>
            <person name="Walker C.B."/>
            <person name="de la Torre J.R."/>
            <person name="Klotz M.G."/>
            <person name="Urakawa H."/>
            <person name="Pinel N."/>
            <person name="Arp D.J."/>
            <person name="Brochier-Armanet C."/>
            <person name="Chain P.S."/>
            <person name="Chan P.P."/>
            <person name="Gollabgir A."/>
            <person name="Hemp J."/>
            <person name="Hugler M."/>
            <person name="Karr E.A."/>
            <person name="Konneke M."/>
            <person name="Shin M."/>
            <person name="Lawton T.J."/>
            <person name="Lowe T."/>
            <person name="Martens-Habbena W."/>
            <person name="Sayavedra-Soto L.A."/>
            <person name="Lang D."/>
            <person name="Sievert S.M."/>
            <person name="Rosenzweig A.C."/>
            <person name="Manning G."/>
            <person name="Stahl D.A."/>
        </authorList>
    </citation>
    <scope>NUCLEOTIDE SEQUENCE [LARGE SCALE GENOMIC DNA]</scope>
    <source>
        <strain>SCM1</strain>
    </source>
</reference>
<gene>
    <name evidence="1" type="primary">hisI</name>
    <name type="ordered locus">Nmar_1551</name>
</gene>
<name>HIS3_NITMS</name>
<protein>
    <recommendedName>
        <fullName evidence="1">Phosphoribosyl-AMP cyclohydrolase</fullName>
        <shortName evidence="1">PRA-CH</shortName>
        <ecNumber evidence="1">3.5.4.19</ecNumber>
    </recommendedName>
</protein>